<comment type="function">
    <text evidence="2">Acts as a CAK-activating kinase that specifically activates crk1 of the crk1-mcs2 CAK complex.</text>
</comment>
<comment type="catalytic activity">
    <reaction>
        <text>L-seryl-[protein] + ATP = O-phospho-L-seryl-[protein] + ADP + H(+)</text>
        <dbReference type="Rhea" id="RHEA:17989"/>
        <dbReference type="Rhea" id="RHEA-COMP:9863"/>
        <dbReference type="Rhea" id="RHEA-COMP:11604"/>
        <dbReference type="ChEBI" id="CHEBI:15378"/>
        <dbReference type="ChEBI" id="CHEBI:29999"/>
        <dbReference type="ChEBI" id="CHEBI:30616"/>
        <dbReference type="ChEBI" id="CHEBI:83421"/>
        <dbReference type="ChEBI" id="CHEBI:456216"/>
        <dbReference type="EC" id="2.7.11.22"/>
    </reaction>
</comment>
<comment type="catalytic activity">
    <reaction>
        <text>L-threonyl-[protein] + ATP = O-phospho-L-threonyl-[protein] + ADP + H(+)</text>
        <dbReference type="Rhea" id="RHEA:46608"/>
        <dbReference type="Rhea" id="RHEA-COMP:11060"/>
        <dbReference type="Rhea" id="RHEA-COMP:11605"/>
        <dbReference type="ChEBI" id="CHEBI:15378"/>
        <dbReference type="ChEBI" id="CHEBI:30013"/>
        <dbReference type="ChEBI" id="CHEBI:30616"/>
        <dbReference type="ChEBI" id="CHEBI:61977"/>
        <dbReference type="ChEBI" id="CHEBI:456216"/>
        <dbReference type="EC" id="2.7.11.22"/>
    </reaction>
</comment>
<comment type="similarity">
    <text evidence="3">Belongs to the protein kinase superfamily. CMGC Ser/Thr protein kinase family. CDC2/CDKX subfamily.</text>
</comment>
<keyword id="KW-0067">ATP-binding</keyword>
<keyword id="KW-0418">Kinase</keyword>
<keyword id="KW-0547">Nucleotide-binding</keyword>
<keyword id="KW-1185">Reference proteome</keyword>
<keyword id="KW-0723">Serine/threonine-protein kinase</keyword>
<keyword id="KW-0808">Transferase</keyword>
<feature type="chain" id="PRO_0000085881" description="Serine/threonine-protein kinase csk1">
    <location>
        <begin position="1"/>
        <end position="306"/>
    </location>
</feature>
<feature type="domain" description="Protein kinase" evidence="1">
    <location>
        <begin position="11"/>
        <end position="306"/>
    </location>
</feature>
<feature type="active site" description="Proton acceptor" evidence="1">
    <location>
        <position position="129"/>
    </location>
</feature>
<feature type="binding site" evidence="1">
    <location>
        <begin position="17"/>
        <end position="25"/>
    </location>
    <ligand>
        <name>ATP</name>
        <dbReference type="ChEBI" id="CHEBI:30616"/>
    </ligand>
</feature>
<feature type="binding site" evidence="1">
    <location>
        <position position="40"/>
    </location>
    <ligand>
        <name>ATP</name>
        <dbReference type="ChEBI" id="CHEBI:30616"/>
    </ligand>
</feature>
<gene>
    <name type="primary">csk1</name>
    <name type="ORF">SPAC1D4.06c</name>
</gene>
<accession>P36615</accession>
<dbReference type="EC" id="2.7.11.22"/>
<dbReference type="EMBL" id="S59896">
    <property type="protein sequence ID" value="AAB26194.1"/>
    <property type="molecule type" value="Genomic_DNA"/>
</dbReference>
<dbReference type="EMBL" id="CU329670">
    <property type="protein sequence ID" value="CAA93215.1"/>
    <property type="molecule type" value="Genomic_DNA"/>
</dbReference>
<dbReference type="PIR" id="S39151">
    <property type="entry name" value="S39151"/>
</dbReference>
<dbReference type="RefSeq" id="NP_593019.1">
    <property type="nucleotide sequence ID" value="NM_001018418.1"/>
</dbReference>
<dbReference type="SMR" id="P36615"/>
<dbReference type="BioGRID" id="279750">
    <property type="interactions" value="92"/>
</dbReference>
<dbReference type="FunCoup" id="P36615">
    <property type="interactions" value="283"/>
</dbReference>
<dbReference type="STRING" id="284812.P36615"/>
<dbReference type="PaxDb" id="4896-SPAC1D4.06c.1"/>
<dbReference type="EnsemblFungi" id="SPAC1D4.06c.1">
    <property type="protein sequence ID" value="SPAC1D4.06c.1:pep"/>
    <property type="gene ID" value="SPAC1D4.06c"/>
</dbReference>
<dbReference type="GeneID" id="2543327"/>
<dbReference type="KEGG" id="spo:2543327"/>
<dbReference type="PomBase" id="SPAC1D4.06c">
    <property type="gene designation" value="csk1"/>
</dbReference>
<dbReference type="VEuPathDB" id="FungiDB:SPAC1D4.06c"/>
<dbReference type="eggNOG" id="KOG0594">
    <property type="taxonomic scope" value="Eukaryota"/>
</dbReference>
<dbReference type="HOGENOM" id="CLU_000288_181_6_1"/>
<dbReference type="InParanoid" id="P36615"/>
<dbReference type="OMA" id="FPDWNKF"/>
<dbReference type="PhylomeDB" id="P36615"/>
<dbReference type="BRENDA" id="2.7.11.22">
    <property type="organism ID" value="5613"/>
</dbReference>
<dbReference type="Reactome" id="R-SPO-3214858">
    <property type="pathway name" value="RMTs methylate histone arginines"/>
</dbReference>
<dbReference type="Reactome" id="R-SPO-69231">
    <property type="pathway name" value="Cyclin D associated events in G1"/>
</dbReference>
<dbReference type="Reactome" id="R-SPO-75815">
    <property type="pathway name" value="Ubiquitin-dependent degradation of Cyclin D"/>
</dbReference>
<dbReference type="Reactome" id="R-SPO-9754119">
    <property type="pathway name" value="Drug-mediated inhibition of CDK4/CDK6 activity"/>
</dbReference>
<dbReference type="PRO" id="PR:P36615"/>
<dbReference type="Proteomes" id="UP000002485">
    <property type="component" value="Chromosome I"/>
</dbReference>
<dbReference type="GO" id="GO:0000307">
    <property type="term" value="C:cyclin-dependent protein kinase holoenzyme complex"/>
    <property type="evidence" value="ECO:0000318"/>
    <property type="project" value="GO_Central"/>
</dbReference>
<dbReference type="GO" id="GO:0005737">
    <property type="term" value="C:cytoplasm"/>
    <property type="evidence" value="ECO:0000318"/>
    <property type="project" value="GO_Central"/>
</dbReference>
<dbReference type="GO" id="GO:0005829">
    <property type="term" value="C:cytosol"/>
    <property type="evidence" value="ECO:0007005"/>
    <property type="project" value="PomBase"/>
</dbReference>
<dbReference type="GO" id="GO:0005634">
    <property type="term" value="C:nucleus"/>
    <property type="evidence" value="ECO:0007005"/>
    <property type="project" value="PomBase"/>
</dbReference>
<dbReference type="GO" id="GO:0005524">
    <property type="term" value="F:ATP binding"/>
    <property type="evidence" value="ECO:0000255"/>
    <property type="project" value="PomBase"/>
</dbReference>
<dbReference type="GO" id="GO:0030332">
    <property type="term" value="F:cyclin binding"/>
    <property type="evidence" value="ECO:0000318"/>
    <property type="project" value="GO_Central"/>
</dbReference>
<dbReference type="GO" id="GO:0019912">
    <property type="term" value="F:cyclin-dependent protein kinase activating kinase activity"/>
    <property type="evidence" value="ECO:0000314"/>
    <property type="project" value="PomBase"/>
</dbReference>
<dbReference type="GO" id="GO:0004693">
    <property type="term" value="F:cyclin-dependent protein serine/threonine kinase activity"/>
    <property type="evidence" value="ECO:0000318"/>
    <property type="project" value="GO_Central"/>
</dbReference>
<dbReference type="GO" id="GO:0004672">
    <property type="term" value="F:protein kinase activity"/>
    <property type="evidence" value="ECO:0000314"/>
    <property type="project" value="PomBase"/>
</dbReference>
<dbReference type="GO" id="GO:0106310">
    <property type="term" value="F:protein serine kinase activity"/>
    <property type="evidence" value="ECO:0007669"/>
    <property type="project" value="RHEA"/>
</dbReference>
<dbReference type="GO" id="GO:0004674">
    <property type="term" value="F:protein serine/threonine kinase activity"/>
    <property type="evidence" value="ECO:0000314"/>
    <property type="project" value="PomBase"/>
</dbReference>
<dbReference type="GO" id="GO:0000082">
    <property type="term" value="P:G1/S transition of mitotic cell cycle"/>
    <property type="evidence" value="ECO:0000318"/>
    <property type="project" value="GO_Central"/>
</dbReference>
<dbReference type="GO" id="GO:0030643">
    <property type="term" value="P:intracellular phosphate ion homeostasis"/>
    <property type="evidence" value="ECO:0000315"/>
    <property type="project" value="PomBase"/>
</dbReference>
<dbReference type="GO" id="GO:0000122">
    <property type="term" value="P:negative regulation of transcription by RNA polymerase II"/>
    <property type="evidence" value="ECO:0000315"/>
    <property type="project" value="PomBase"/>
</dbReference>
<dbReference type="GO" id="GO:0010971">
    <property type="term" value="P:positive regulation of G2/M transition of mitotic cell cycle"/>
    <property type="evidence" value="ECO:0000269"/>
    <property type="project" value="PomBase"/>
</dbReference>
<dbReference type="GO" id="GO:0010389">
    <property type="term" value="P:regulation of G2/M transition of mitotic cell cycle"/>
    <property type="evidence" value="ECO:0000318"/>
    <property type="project" value="GO_Central"/>
</dbReference>
<dbReference type="GO" id="GO:0010468">
    <property type="term" value="P:regulation of gene expression"/>
    <property type="evidence" value="ECO:0000318"/>
    <property type="project" value="GO_Central"/>
</dbReference>
<dbReference type="GO" id="GO:0051445">
    <property type="term" value="P:regulation of meiotic cell cycle"/>
    <property type="evidence" value="ECO:0000266"/>
    <property type="project" value="PomBase"/>
</dbReference>
<dbReference type="GO" id="GO:0007165">
    <property type="term" value="P:signal transduction"/>
    <property type="evidence" value="ECO:0000318"/>
    <property type="project" value="GO_Central"/>
</dbReference>
<dbReference type="FunFam" id="1.10.510.10:FF:001300">
    <property type="entry name" value="Serine/threonine-protein kinase csk1"/>
    <property type="match status" value="1"/>
</dbReference>
<dbReference type="Gene3D" id="3.30.200.20">
    <property type="entry name" value="Phosphorylase Kinase, domain 1"/>
    <property type="match status" value="1"/>
</dbReference>
<dbReference type="Gene3D" id="1.10.510.10">
    <property type="entry name" value="Transferase(Phosphotransferase) domain 1"/>
    <property type="match status" value="1"/>
</dbReference>
<dbReference type="InterPro" id="IPR050108">
    <property type="entry name" value="CDK"/>
</dbReference>
<dbReference type="InterPro" id="IPR011009">
    <property type="entry name" value="Kinase-like_dom_sf"/>
</dbReference>
<dbReference type="InterPro" id="IPR000719">
    <property type="entry name" value="Prot_kinase_dom"/>
</dbReference>
<dbReference type="PANTHER" id="PTHR24056">
    <property type="entry name" value="CELL DIVISION PROTEIN KINASE"/>
    <property type="match status" value="1"/>
</dbReference>
<dbReference type="PANTHER" id="PTHR24056:SF576">
    <property type="entry name" value="SERINE_THREONINE-PROTEIN KINASE CSK1"/>
    <property type="match status" value="1"/>
</dbReference>
<dbReference type="Pfam" id="PF00069">
    <property type="entry name" value="Pkinase"/>
    <property type="match status" value="1"/>
</dbReference>
<dbReference type="SUPFAM" id="SSF56112">
    <property type="entry name" value="Protein kinase-like (PK-like)"/>
    <property type="match status" value="1"/>
</dbReference>
<dbReference type="PROSITE" id="PS50011">
    <property type="entry name" value="PROTEIN_KINASE_DOM"/>
    <property type="match status" value="1"/>
</dbReference>
<protein>
    <recommendedName>
        <fullName>Serine/threonine-protein kinase csk1</fullName>
        <ecNumber>2.7.11.22</ecNumber>
    </recommendedName>
    <alternativeName>
        <fullName>CAK-activating kinase</fullName>
        <shortName>CAKAK</shortName>
    </alternativeName>
</protein>
<proteinExistence type="inferred from homology"/>
<reference key="1">
    <citation type="journal article" date="1993" name="EMBO J.">
        <title>Characterization of the fission yeast mcs2 cyclin and its associated protein kinase activity.</title>
        <authorList>
            <person name="Molz L."/>
            <person name="Beach D."/>
        </authorList>
    </citation>
    <scope>NUCLEOTIDE SEQUENCE [GENOMIC DNA]</scope>
</reference>
<reference key="2">
    <citation type="journal article" date="2002" name="Nature">
        <title>The genome sequence of Schizosaccharomyces pombe.</title>
        <authorList>
            <person name="Wood V."/>
            <person name="Gwilliam R."/>
            <person name="Rajandream M.A."/>
            <person name="Lyne M.H."/>
            <person name="Lyne R."/>
            <person name="Stewart A."/>
            <person name="Sgouros J.G."/>
            <person name="Peat N."/>
            <person name="Hayles J."/>
            <person name="Baker S.G."/>
            <person name="Basham D."/>
            <person name="Bowman S."/>
            <person name="Brooks K."/>
            <person name="Brown D."/>
            <person name="Brown S."/>
            <person name="Chillingworth T."/>
            <person name="Churcher C.M."/>
            <person name="Collins M."/>
            <person name="Connor R."/>
            <person name="Cronin A."/>
            <person name="Davis P."/>
            <person name="Feltwell T."/>
            <person name="Fraser A."/>
            <person name="Gentles S."/>
            <person name="Goble A."/>
            <person name="Hamlin N."/>
            <person name="Harris D.E."/>
            <person name="Hidalgo J."/>
            <person name="Hodgson G."/>
            <person name="Holroyd S."/>
            <person name="Hornsby T."/>
            <person name="Howarth S."/>
            <person name="Huckle E.J."/>
            <person name="Hunt S."/>
            <person name="Jagels K."/>
            <person name="James K.D."/>
            <person name="Jones L."/>
            <person name="Jones M."/>
            <person name="Leather S."/>
            <person name="McDonald S."/>
            <person name="McLean J."/>
            <person name="Mooney P."/>
            <person name="Moule S."/>
            <person name="Mungall K.L."/>
            <person name="Murphy L.D."/>
            <person name="Niblett D."/>
            <person name="Odell C."/>
            <person name="Oliver K."/>
            <person name="O'Neil S."/>
            <person name="Pearson D."/>
            <person name="Quail M.A."/>
            <person name="Rabbinowitsch E."/>
            <person name="Rutherford K.M."/>
            <person name="Rutter S."/>
            <person name="Saunders D."/>
            <person name="Seeger K."/>
            <person name="Sharp S."/>
            <person name="Skelton J."/>
            <person name="Simmonds M.N."/>
            <person name="Squares R."/>
            <person name="Squares S."/>
            <person name="Stevens K."/>
            <person name="Taylor K."/>
            <person name="Taylor R.G."/>
            <person name="Tivey A."/>
            <person name="Walsh S.V."/>
            <person name="Warren T."/>
            <person name="Whitehead S."/>
            <person name="Woodward J.R."/>
            <person name="Volckaert G."/>
            <person name="Aert R."/>
            <person name="Robben J."/>
            <person name="Grymonprez B."/>
            <person name="Weltjens I."/>
            <person name="Vanstreels E."/>
            <person name="Rieger M."/>
            <person name="Schaefer M."/>
            <person name="Mueller-Auer S."/>
            <person name="Gabel C."/>
            <person name="Fuchs M."/>
            <person name="Duesterhoeft A."/>
            <person name="Fritzc C."/>
            <person name="Holzer E."/>
            <person name="Moestl D."/>
            <person name="Hilbert H."/>
            <person name="Borzym K."/>
            <person name="Langer I."/>
            <person name="Beck A."/>
            <person name="Lehrach H."/>
            <person name="Reinhardt R."/>
            <person name="Pohl T.M."/>
            <person name="Eger P."/>
            <person name="Zimmermann W."/>
            <person name="Wedler H."/>
            <person name="Wambutt R."/>
            <person name="Purnelle B."/>
            <person name="Goffeau A."/>
            <person name="Cadieu E."/>
            <person name="Dreano S."/>
            <person name="Gloux S."/>
            <person name="Lelaure V."/>
            <person name="Mottier S."/>
            <person name="Galibert F."/>
            <person name="Aves S.J."/>
            <person name="Xiang Z."/>
            <person name="Hunt C."/>
            <person name="Moore K."/>
            <person name="Hurst S.M."/>
            <person name="Lucas M."/>
            <person name="Rochet M."/>
            <person name="Gaillardin C."/>
            <person name="Tallada V.A."/>
            <person name="Garzon A."/>
            <person name="Thode G."/>
            <person name="Daga R.R."/>
            <person name="Cruzado L."/>
            <person name="Jimenez J."/>
            <person name="Sanchez M."/>
            <person name="del Rey F."/>
            <person name="Benito J."/>
            <person name="Dominguez A."/>
            <person name="Revuelta J.L."/>
            <person name="Moreno S."/>
            <person name="Armstrong J."/>
            <person name="Forsburg S.L."/>
            <person name="Cerutti L."/>
            <person name="Lowe T."/>
            <person name="McCombie W.R."/>
            <person name="Paulsen I."/>
            <person name="Potashkin J."/>
            <person name="Shpakovski G.V."/>
            <person name="Ussery D."/>
            <person name="Barrell B.G."/>
            <person name="Nurse P."/>
        </authorList>
    </citation>
    <scope>NUCLEOTIDE SEQUENCE [LARGE SCALE GENOMIC DNA]</scope>
    <source>
        <strain>972 / ATCC 24843</strain>
    </source>
</reference>
<reference key="3">
    <citation type="journal article" date="1998" name="EMBO J.">
        <title>Fission yeast Csk1 is a CAK-activating kinase (CAKAK).</title>
        <authorList>
            <person name="Hermand D."/>
            <person name="Pihlak A."/>
            <person name="Westerling T."/>
            <person name="Damagnez V."/>
            <person name="Vandenhaute J."/>
            <person name="Cottarel G."/>
            <person name="Makela T.P."/>
        </authorList>
    </citation>
    <scope>FUNCTION</scope>
</reference>
<evidence type="ECO:0000255" key="1">
    <source>
        <dbReference type="PROSITE-ProRule" id="PRU00159"/>
    </source>
</evidence>
<evidence type="ECO:0000269" key="2">
    <source>
    </source>
</evidence>
<evidence type="ECO:0000305" key="3"/>
<sequence>MKSVGHFVPWLTDIRHLTDGTISEVFVGERKNSKKLYVIKVQGLVFKRPPHDAMRGKLILESIGHPHIERIVDSFIDNEAGSVYLITSFKSFVLSDVMDEISIDTKCKIVLQISSALEYLEKHGILHRDIHPNNILLDSMNGPAYLSDFSIAWSKQHPGEEVQELIPQIGTGHYRAIETLFGCHSYGHEVDRWTFGILIAELFSNQALFDDGSSEGWPSELRLTSSIIQTLGTPNPSMWPELSTFPDWNKFIFHEYPPKPWSEILPSVDTSIQYIVSHLVTYSNRASPSFVIESFPKVSARLSQYA</sequence>
<name>CSK1_SCHPO</name>
<organism>
    <name type="scientific">Schizosaccharomyces pombe (strain 972 / ATCC 24843)</name>
    <name type="common">Fission yeast</name>
    <dbReference type="NCBI Taxonomy" id="284812"/>
    <lineage>
        <taxon>Eukaryota</taxon>
        <taxon>Fungi</taxon>
        <taxon>Dikarya</taxon>
        <taxon>Ascomycota</taxon>
        <taxon>Taphrinomycotina</taxon>
        <taxon>Schizosaccharomycetes</taxon>
        <taxon>Schizosaccharomycetales</taxon>
        <taxon>Schizosaccharomycetaceae</taxon>
        <taxon>Schizosaccharomyces</taxon>
    </lineage>
</organism>